<protein>
    <recommendedName>
        <fullName evidence="1">Adapter protein MecA</fullName>
    </recommendedName>
</protein>
<dbReference type="EMBL" id="AE015929">
    <property type="protein sequence ID" value="AAO04285.1"/>
    <property type="molecule type" value="Genomic_DNA"/>
</dbReference>
<dbReference type="RefSeq" id="NP_764243.1">
    <property type="nucleotide sequence ID" value="NC_004461.1"/>
</dbReference>
<dbReference type="RefSeq" id="WP_001829308.1">
    <property type="nucleotide sequence ID" value="NZ_WBME01000019.1"/>
</dbReference>
<dbReference type="SMR" id="Q8CPS8"/>
<dbReference type="GeneID" id="50019172"/>
<dbReference type="KEGG" id="sep:SE_0688"/>
<dbReference type="PATRIC" id="fig|176280.10.peg.662"/>
<dbReference type="eggNOG" id="COG4862">
    <property type="taxonomic scope" value="Bacteria"/>
</dbReference>
<dbReference type="HOGENOM" id="CLU_071496_2_1_9"/>
<dbReference type="OrthoDB" id="2360201at2"/>
<dbReference type="Proteomes" id="UP000001411">
    <property type="component" value="Chromosome"/>
</dbReference>
<dbReference type="GO" id="GO:0030674">
    <property type="term" value="F:protein-macromolecule adaptor activity"/>
    <property type="evidence" value="ECO:0007669"/>
    <property type="project" value="UniProtKB-UniRule"/>
</dbReference>
<dbReference type="Gene3D" id="3.30.70.1950">
    <property type="match status" value="1"/>
</dbReference>
<dbReference type="HAMAP" id="MF_01124">
    <property type="entry name" value="MecA"/>
    <property type="match status" value="1"/>
</dbReference>
<dbReference type="InterPro" id="IPR038471">
    <property type="entry name" value="MecA_C_sf"/>
</dbReference>
<dbReference type="InterPro" id="IPR008681">
    <property type="entry name" value="Neg-reg_MecA"/>
</dbReference>
<dbReference type="NCBIfam" id="NF002642">
    <property type="entry name" value="PRK02315.1-3"/>
    <property type="match status" value="1"/>
</dbReference>
<dbReference type="NCBIfam" id="NF002644">
    <property type="entry name" value="PRK02315.1-5"/>
    <property type="match status" value="1"/>
</dbReference>
<dbReference type="PANTHER" id="PTHR39161">
    <property type="entry name" value="ADAPTER PROTEIN MECA"/>
    <property type="match status" value="1"/>
</dbReference>
<dbReference type="PANTHER" id="PTHR39161:SF1">
    <property type="entry name" value="ADAPTER PROTEIN MECA 1"/>
    <property type="match status" value="1"/>
</dbReference>
<dbReference type="Pfam" id="PF05389">
    <property type="entry name" value="MecA"/>
    <property type="match status" value="1"/>
</dbReference>
<dbReference type="PIRSF" id="PIRSF029008">
    <property type="entry name" value="MecA"/>
    <property type="match status" value="1"/>
</dbReference>
<organism>
    <name type="scientific">Staphylococcus epidermidis (strain ATCC 12228 / FDA PCI 1200)</name>
    <dbReference type="NCBI Taxonomy" id="176280"/>
    <lineage>
        <taxon>Bacteria</taxon>
        <taxon>Bacillati</taxon>
        <taxon>Bacillota</taxon>
        <taxon>Bacilli</taxon>
        <taxon>Bacillales</taxon>
        <taxon>Staphylococcaceae</taxon>
        <taxon>Staphylococcus</taxon>
    </lineage>
</organism>
<reference key="1">
    <citation type="journal article" date="2003" name="Mol. Microbiol.">
        <title>Genome-based analysis of virulence genes in a non-biofilm-forming Staphylococcus epidermidis strain (ATCC 12228).</title>
        <authorList>
            <person name="Zhang Y.-Q."/>
            <person name="Ren S.-X."/>
            <person name="Li H.-L."/>
            <person name="Wang Y.-X."/>
            <person name="Fu G."/>
            <person name="Yang J."/>
            <person name="Qin Z.-Q."/>
            <person name="Miao Y.-G."/>
            <person name="Wang W.-Y."/>
            <person name="Chen R.-S."/>
            <person name="Shen Y."/>
            <person name="Chen Z."/>
            <person name="Yuan Z.-H."/>
            <person name="Zhao G.-P."/>
            <person name="Qu D."/>
            <person name="Danchin A."/>
            <person name="Wen Y.-M."/>
        </authorList>
    </citation>
    <scope>NUCLEOTIDE SEQUENCE [LARGE SCALE GENOMIC DNA]</scope>
    <source>
        <strain>ATCC 12228 / FDA PCI 1200</strain>
    </source>
</reference>
<gene>
    <name evidence="1" type="primary">mecA</name>
    <name type="ordered locus">SE_0688</name>
</gene>
<accession>Q8CPS8</accession>
<name>MECA_STAES</name>
<sequence>MRIERVDDTTVKLFITYSDIEARGFSREDLWSNRKRGEEFFWSMMDEINEEEDFVVEGPLWIQVHAFEKGVEVTISKSKNEDAMNMSDDDTNHQFDDQVNELLAQTLEGEESLEDLFEQRKQQKKNHQDKQQRRAHKPSNVRNIIVKFDDLEQVIDYAYHNNQNTDEFEDLLYMIDNKYYYSIHFDDSVSQEMINDSYSQLLEFAYPTDKTNIYLNDYAKIIMSHNVTSQVRKYFTDTNE</sequence>
<feature type="chain" id="PRO_0000212282" description="Adapter protein MecA">
    <location>
        <begin position="1"/>
        <end position="240"/>
    </location>
</feature>
<feature type="region of interest" description="Disordered" evidence="2">
    <location>
        <begin position="119"/>
        <end position="138"/>
    </location>
</feature>
<feature type="compositionally biased region" description="Basic and acidic residues" evidence="2">
    <location>
        <begin position="119"/>
        <end position="132"/>
    </location>
</feature>
<evidence type="ECO:0000255" key="1">
    <source>
        <dbReference type="HAMAP-Rule" id="MF_01124"/>
    </source>
</evidence>
<evidence type="ECO:0000256" key="2">
    <source>
        <dbReference type="SAM" id="MobiDB-lite"/>
    </source>
</evidence>
<comment type="function">
    <text evidence="1">Enables the recognition and targeting of unfolded and aggregated proteins to the ClpC protease or to other proteins involved in proteolysis.</text>
</comment>
<comment type="subunit">
    <text evidence="1">Homodimer.</text>
</comment>
<comment type="domain">
    <text>The N-terminal domain probably binds unfolded/aggregated proteins; the C-terminal domain interacts with ClpC.</text>
</comment>
<comment type="similarity">
    <text evidence="1">Belongs to the MecA family.</text>
</comment>
<proteinExistence type="inferred from homology"/>